<feature type="chain" id="PRO_0000215346" description="Transient receptor potential cation channel subfamily V member 3">
    <location>
        <begin position="1"/>
        <end position="791"/>
    </location>
</feature>
<feature type="topological domain" description="Cytoplasmic" evidence="1">
    <location>
        <begin position="1"/>
        <end position="430"/>
    </location>
</feature>
<feature type="transmembrane region" description="Helical; Name=S1" evidence="1">
    <location>
        <begin position="431"/>
        <end position="460"/>
    </location>
</feature>
<feature type="topological domain" description="Extracellular" evidence="1">
    <location>
        <begin position="461"/>
        <end position="479"/>
    </location>
</feature>
<feature type="transmembrane region" description="Helical; Name=S2" evidence="1">
    <location>
        <begin position="480"/>
        <end position="508"/>
    </location>
</feature>
<feature type="topological domain" description="Cytoplasmic" evidence="1">
    <location>
        <begin position="509"/>
        <end position="519"/>
    </location>
</feature>
<feature type="transmembrane region" description="Helical; Name=S3" evidence="1">
    <location>
        <begin position="520"/>
        <end position="540"/>
    </location>
</feature>
<feature type="topological domain" description="Extracellular" evidence="1">
    <location>
        <begin position="541"/>
        <end position="545"/>
    </location>
</feature>
<feature type="transmembrane region" description="Helical; Name=S4" evidence="1">
    <location>
        <begin position="546"/>
        <end position="566"/>
    </location>
</feature>
<feature type="topological domain" description="Cytoplasmic" evidence="1">
    <location>
        <begin position="567"/>
        <end position="569"/>
    </location>
</feature>
<feature type="transmembrane region" description="Helical; Name=S5" evidence="1">
    <location>
        <begin position="570"/>
        <end position="608"/>
    </location>
</feature>
<feature type="topological domain" description="Extracellular" evidence="1">
    <location>
        <begin position="609"/>
        <end position="620"/>
    </location>
</feature>
<feature type="intramembrane region" description="Pore-forming" evidence="1">
    <location>
        <begin position="621"/>
        <end position="646"/>
    </location>
</feature>
<feature type="topological domain" description="Extracellular" evidence="1">
    <location>
        <begin position="647"/>
        <end position="649"/>
    </location>
</feature>
<feature type="transmembrane region" description="Helical; Name=S6" evidence="1">
    <location>
        <begin position="650"/>
        <end position="686"/>
    </location>
</feature>
<feature type="topological domain" description="Cytoplasmic" evidence="1">
    <location>
        <begin position="687"/>
        <end position="791"/>
    </location>
</feature>
<feature type="repeat" description="ANK 1" evidence="1">
    <location>
        <begin position="117"/>
        <end position="148"/>
    </location>
</feature>
<feature type="repeat" description="ANK 2" evidence="1">
    <location>
        <begin position="170"/>
        <end position="198"/>
    </location>
</feature>
<feature type="repeat" description="ANK 3" evidence="1">
    <location>
        <begin position="214"/>
        <end position="243"/>
    </location>
</feature>
<feature type="repeat" description="ANK 4" evidence="1">
    <location>
        <begin position="261"/>
        <end position="291"/>
    </location>
</feature>
<feature type="repeat" description="ANK 5" evidence="1">
    <location>
        <begin position="298"/>
        <end position="330"/>
    </location>
</feature>
<feature type="repeat" description="ANK 6" evidence="1">
    <location>
        <begin position="340"/>
        <end position="362"/>
    </location>
</feature>
<feature type="repeat" description="ANK 7" evidence="1">
    <location>
        <begin position="398"/>
        <end position="420"/>
    </location>
</feature>
<feature type="region of interest" description="Disordered" evidence="2">
    <location>
        <begin position="1"/>
        <end position="37"/>
    </location>
</feature>
<feature type="region of interest" description="Disordered" evidence="2">
    <location>
        <begin position="52"/>
        <end position="71"/>
    </location>
</feature>
<feature type="region of interest" description="Disordered" evidence="2">
    <location>
        <begin position="76"/>
        <end position="113"/>
    </location>
</feature>
<feature type="compositionally biased region" description="Polar residues" evidence="2">
    <location>
        <begin position="95"/>
        <end position="105"/>
    </location>
</feature>
<feature type="binding site" evidence="1">
    <location>
        <position position="638"/>
    </location>
    <ligand>
        <name>Na(+)</name>
        <dbReference type="ChEBI" id="CHEBI:29101"/>
        <note>ligand shared among four neighboring subunits</note>
    </ligand>
</feature>
<feature type="sequence conflict" description="In Ref. 1; AAM33069." evidence="4" ref="1">
    <original>A</original>
    <variation>V</variation>
    <location>
        <position position="9"/>
    </location>
</feature>
<feature type="helix" evidence="5">
    <location>
        <begin position="119"/>
        <end position="129"/>
    </location>
</feature>
<feature type="helix" evidence="5">
    <location>
        <begin position="132"/>
        <end position="145"/>
    </location>
</feature>
<feature type="helix" evidence="5">
    <location>
        <begin position="154"/>
        <end position="161"/>
    </location>
</feature>
<feature type="turn" evidence="5">
    <location>
        <begin position="165"/>
        <end position="167"/>
    </location>
</feature>
<feature type="helix" evidence="5">
    <location>
        <begin position="171"/>
        <end position="177"/>
    </location>
</feature>
<feature type="turn" evidence="6">
    <location>
        <begin position="180"/>
        <end position="182"/>
    </location>
</feature>
<feature type="helix" evidence="5">
    <location>
        <begin position="183"/>
        <end position="196"/>
    </location>
</feature>
<feature type="helix" evidence="5">
    <location>
        <begin position="200"/>
        <end position="204"/>
    </location>
</feature>
<feature type="helix" evidence="5">
    <location>
        <begin position="211"/>
        <end position="213"/>
    </location>
</feature>
<feature type="helix" evidence="5">
    <location>
        <begin position="218"/>
        <end position="224"/>
    </location>
</feature>
<feature type="helix" evidence="5">
    <location>
        <begin position="228"/>
        <end position="236"/>
    </location>
</feature>
<feature type="helix" evidence="7">
    <location>
        <begin position="248"/>
        <end position="250"/>
    </location>
</feature>
<feature type="strand" evidence="5">
    <location>
        <begin position="253"/>
        <end position="255"/>
    </location>
</feature>
<feature type="helix" evidence="5">
    <location>
        <begin position="265"/>
        <end position="271"/>
    </location>
</feature>
<feature type="helix" evidence="5">
    <location>
        <begin position="275"/>
        <end position="282"/>
    </location>
</feature>
<feature type="strand" evidence="10">
    <location>
        <begin position="284"/>
        <end position="286"/>
    </location>
</feature>
<feature type="helix" evidence="5">
    <location>
        <begin position="299"/>
        <end position="306"/>
    </location>
</feature>
<feature type="strand" evidence="5">
    <location>
        <begin position="311"/>
        <end position="313"/>
    </location>
</feature>
<feature type="helix" evidence="5">
    <location>
        <begin position="316"/>
        <end position="328"/>
    </location>
</feature>
<feature type="helix" evidence="5">
    <location>
        <begin position="331"/>
        <end position="334"/>
    </location>
</feature>
<feature type="helix" evidence="5">
    <location>
        <begin position="344"/>
        <end position="350"/>
    </location>
</feature>
<feature type="helix" evidence="5">
    <location>
        <begin position="354"/>
        <end position="362"/>
    </location>
</feature>
<feature type="helix" evidence="7">
    <location>
        <begin position="371"/>
        <end position="373"/>
    </location>
</feature>
<feature type="strand" evidence="7">
    <location>
        <begin position="375"/>
        <end position="382"/>
    </location>
</feature>
<feature type="strand" evidence="7">
    <location>
        <begin position="385"/>
        <end position="391"/>
    </location>
</feature>
<feature type="turn" evidence="7">
    <location>
        <begin position="393"/>
        <end position="395"/>
    </location>
</feature>
<feature type="strand" evidence="9">
    <location>
        <begin position="399"/>
        <end position="401"/>
    </location>
</feature>
<feature type="helix" evidence="7">
    <location>
        <begin position="403"/>
        <end position="408"/>
    </location>
</feature>
<feature type="helix" evidence="7">
    <location>
        <begin position="416"/>
        <end position="419"/>
    </location>
</feature>
<feature type="helix" evidence="7">
    <location>
        <begin position="423"/>
        <end position="435"/>
    </location>
</feature>
<feature type="helix" evidence="7">
    <location>
        <begin position="437"/>
        <end position="460"/>
    </location>
</feature>
<feature type="strand" evidence="9">
    <location>
        <begin position="465"/>
        <end position="468"/>
    </location>
</feature>
<feature type="turn" evidence="7">
    <location>
        <begin position="472"/>
        <end position="475"/>
    </location>
</feature>
<feature type="turn" evidence="7">
    <location>
        <begin position="482"/>
        <end position="484"/>
    </location>
</feature>
<feature type="helix" evidence="7">
    <location>
        <begin position="485"/>
        <end position="507"/>
    </location>
</feature>
<feature type="helix" evidence="7">
    <location>
        <begin position="513"/>
        <end position="518"/>
    </location>
</feature>
<feature type="helix" evidence="7">
    <location>
        <begin position="521"/>
        <end position="541"/>
    </location>
</feature>
<feature type="helix" evidence="7">
    <location>
        <begin position="547"/>
        <end position="560"/>
    </location>
</feature>
<feature type="helix" evidence="7">
    <location>
        <begin position="561"/>
        <end position="568"/>
    </location>
</feature>
<feature type="helix" evidence="7">
    <location>
        <begin position="570"/>
        <end position="585"/>
    </location>
</feature>
<feature type="helix" evidence="7">
    <location>
        <begin position="587"/>
        <end position="606"/>
    </location>
</feature>
<feature type="turn" evidence="9">
    <location>
        <begin position="613"/>
        <end position="615"/>
    </location>
</feature>
<feature type="strand" evidence="9">
    <location>
        <begin position="616"/>
        <end position="619"/>
    </location>
</feature>
<feature type="helix" evidence="7">
    <location>
        <begin position="625"/>
        <end position="636"/>
    </location>
</feature>
<feature type="strand" evidence="7">
    <location>
        <begin position="647"/>
        <end position="649"/>
    </location>
</feature>
<feature type="helix" evidence="7">
    <location>
        <begin position="651"/>
        <end position="665"/>
    </location>
</feature>
<feature type="turn" evidence="7">
    <location>
        <begin position="666"/>
        <end position="668"/>
    </location>
</feature>
<feature type="helix" evidence="7">
    <location>
        <begin position="669"/>
        <end position="684"/>
    </location>
</feature>
<feature type="turn" evidence="7">
    <location>
        <begin position="685"/>
        <end position="687"/>
    </location>
</feature>
<feature type="helix" evidence="7">
    <location>
        <begin position="688"/>
        <end position="705"/>
    </location>
</feature>
<feature type="helix" evidence="7">
    <location>
        <begin position="709"/>
        <end position="712"/>
    </location>
</feature>
<feature type="turn" evidence="8">
    <location>
        <begin position="713"/>
        <end position="715"/>
    </location>
</feature>
<feature type="strand" evidence="7">
    <location>
        <begin position="718"/>
        <end position="724"/>
    </location>
</feature>
<feature type="strand" evidence="7">
    <location>
        <begin position="727"/>
        <end position="737"/>
    </location>
</feature>
<feature type="strand" evidence="8">
    <location>
        <begin position="747"/>
        <end position="749"/>
    </location>
</feature>
<organism>
    <name type="scientific">Mus musculus</name>
    <name type="common">Mouse</name>
    <dbReference type="NCBI Taxonomy" id="10090"/>
    <lineage>
        <taxon>Eukaryota</taxon>
        <taxon>Metazoa</taxon>
        <taxon>Chordata</taxon>
        <taxon>Craniata</taxon>
        <taxon>Vertebrata</taxon>
        <taxon>Euteleostomi</taxon>
        <taxon>Mammalia</taxon>
        <taxon>Eutheria</taxon>
        <taxon>Euarchontoglires</taxon>
        <taxon>Glires</taxon>
        <taxon>Rodentia</taxon>
        <taxon>Myomorpha</taxon>
        <taxon>Muroidea</taxon>
        <taxon>Muridae</taxon>
        <taxon>Murinae</taxon>
        <taxon>Mus</taxon>
        <taxon>Mus</taxon>
    </lineage>
</organism>
<accession>Q8K424</accession>
<accession>Q5SV08</accession>
<comment type="function">
    <text evidence="1 3">Non-selective calcium permeant cation channel (PubMed:12016205). It is activated by innocuous (warm) temperatures and shows an increased response at noxious temperatures greater than 39 degrees Celsius (By similarity). Activation exhibits an outward rectification (By similarity). The channel pore can dilate to provide permeability to larger cations (By similarity). May associate with TRPV1 and may modulate its activity (By similarity). Is a negative regulator of hair growth and cycling: TRPV3-coupled signaling suppresses keratinocyte proliferation in hair follicles and induces apoptosis and premature hair follicle regression (catagen) (By similarity).</text>
</comment>
<comment type="catalytic activity">
    <reaction evidence="3">
        <text>Ca(2+)(in) = Ca(2+)(out)</text>
        <dbReference type="Rhea" id="RHEA:29671"/>
        <dbReference type="ChEBI" id="CHEBI:29108"/>
    </reaction>
</comment>
<comment type="catalytic activity">
    <reaction evidence="3">
        <text>Mg(2+)(in) = Mg(2+)(out)</text>
        <dbReference type="Rhea" id="RHEA:29827"/>
        <dbReference type="ChEBI" id="CHEBI:18420"/>
    </reaction>
</comment>
<comment type="catalytic activity">
    <reaction evidence="3">
        <text>Na(+)(in) = Na(+)(out)</text>
        <dbReference type="Rhea" id="RHEA:34963"/>
        <dbReference type="ChEBI" id="CHEBI:29101"/>
    </reaction>
</comment>
<comment type="catalytic activity">
    <reaction evidence="3">
        <text>K(+)(in) = K(+)(out)</text>
        <dbReference type="Rhea" id="RHEA:29463"/>
        <dbReference type="ChEBI" id="CHEBI:29103"/>
    </reaction>
</comment>
<comment type="activity regulation">
    <text evidence="1">Activated by cannabinoid that binds to the vanilloid binding pocket (By similarity). Diphenylboronic anhydride induces pore dilation and enhances cation permeability by promoting the conversion to a homopentamer (By similarity).</text>
</comment>
<comment type="subunit">
    <text evidence="1">Homotetramer (By similarity). May convert from a homotetramer to a homopentamer to allow pore dilation (By similarity). Interacts with TRPV1; may form a heteromeric channel with TRPV1 (By similarity). Interacts with SNX11; this interaction promotes TRPV3 trafficking from the cell membrane to lysosome for degradation (By similarity).</text>
</comment>
<comment type="interaction">
    <interactant intactId="EBI-2650739">
        <id>Q8K424</id>
    </interactant>
    <interactant intactId="EBI-297353">
        <id>P00533</id>
        <label>EGFR</label>
    </interactant>
    <organismsDiffer>true</organismsDiffer>
    <experiments>2</experiments>
</comment>
<comment type="subcellular location">
    <subcellularLocation>
        <location evidence="1">Cell membrane</location>
        <topology evidence="1">Multi-pass membrane protein</topology>
    </subcellularLocation>
    <subcellularLocation>
        <location evidence="1">Cytoplasm</location>
    </subcellularLocation>
    <subcellularLocation>
        <location evidence="1">Lysosome</location>
    </subcellularLocation>
    <text evidence="1">Targeted to lysosome for degradation in a SNX11-dependent manner.</text>
</comment>
<comment type="tissue specificity">
    <text evidence="3">Expressed in keratinocytes and hair follicles.</text>
</comment>
<comment type="similarity">
    <text evidence="4">Belongs to the transient receptor (TC 1.A.4) family. TrpV subfamily. TRPV3 sub-subfamily.</text>
</comment>
<sequence length="791" mass="90663">MNAHSKEMAPLMGKRTTAPGGNPVVLTEKRPADLTPTKKSAHFFLEIEGFEPNPTVTKTSPPIFSKPMDSNIRQCLSGNCDDMDSPQSPQDDVTETPSNPNSPSANLAKEEQRQKKKRLKKRIFAAVSEGCVEELRELLQDLQDLCRRRRGLDVPDFLMHKLTASDTGKTCLMKALLNINPNTKEIVRILLAFAEENDILDRFINAEYTEEAYEGQTALNIAIERRQGDITAVLIAAGADVNAHAKGVFFNPKYQHEGFYFGETPLALAACTNQPEIVQLLMENEQTDITSQDSRGNNILHALVTVAEDFKTQNDFVKRMYDMILLRSGNWELETMRNNDGLTPLQLAAKMGKAEILKYILSREIKEKPLRSLSRKFTDWAYGPVSSSLYDLTNVDTTTDNSVLEIIVYNTNIDNRHEMLTLEPLHTLLHTKWKKFAKYMFFLSFCFYFFYNITLTLVSYYRPREDEDLPHPLALTHKMSWLQLLGRMFVLIWATCISVKEGIAIFLLRPSDLQSILSDAWFHFVFFVQAVLVILSVFLYLFAYKEYLACLVLAMALGWANMLYYTRGFQSMGMYSVMIQKVILHDVLKFLFVYILFLLGFGVALASLIEKCSKDKKDCSSYGSFSDAVLELFKLTIGLGDLNIQQNSTYPILFLFLLITYVILTFVLLLNMLIALMGETVENVSKESERIWRLQRARTILEFEKMLPEWLRSRFRMGELCKVADEDFRLCLRINEVKWTEWKTHVSFLNEDPGPIRRTADLNKIQDSSRSNSKTTLYAFDELDEFPETSV</sequence>
<evidence type="ECO:0000250" key="1">
    <source>
        <dbReference type="UniProtKB" id="Q8NET8"/>
    </source>
</evidence>
<evidence type="ECO:0000256" key="2">
    <source>
        <dbReference type="SAM" id="MobiDB-lite"/>
    </source>
</evidence>
<evidence type="ECO:0000269" key="3">
    <source>
    </source>
</evidence>
<evidence type="ECO:0000305" key="4"/>
<evidence type="ECO:0007829" key="5">
    <source>
        <dbReference type="PDB" id="4N5Q"/>
    </source>
</evidence>
<evidence type="ECO:0007829" key="6">
    <source>
        <dbReference type="PDB" id="6LGP"/>
    </source>
</evidence>
<evidence type="ECO:0007829" key="7">
    <source>
        <dbReference type="PDB" id="7MIJ"/>
    </source>
</evidence>
<evidence type="ECO:0007829" key="8">
    <source>
        <dbReference type="PDB" id="7MIK"/>
    </source>
</evidence>
<evidence type="ECO:0007829" key="9">
    <source>
        <dbReference type="PDB" id="7MIN"/>
    </source>
</evidence>
<evidence type="ECO:0007829" key="10">
    <source>
        <dbReference type="PDB" id="7MIO"/>
    </source>
</evidence>
<dbReference type="EMBL" id="AF510316">
    <property type="protein sequence ID" value="AAM33069.1"/>
    <property type="molecule type" value="mRNA"/>
</dbReference>
<dbReference type="EMBL" id="AL645739">
    <property type="status" value="NOT_ANNOTATED_CDS"/>
    <property type="molecule type" value="Genomic_DNA"/>
</dbReference>
<dbReference type="CCDS" id="CCDS25004.1"/>
<dbReference type="RefSeq" id="NP_659567.2">
    <property type="nucleotide sequence ID" value="NM_145099.3"/>
</dbReference>
<dbReference type="PDB" id="4N5Q">
    <property type="method" value="X-ray"/>
    <property type="resolution" value="1.95 A"/>
    <property type="chains" value="A/B=118-367"/>
</dbReference>
<dbReference type="PDB" id="6LGP">
    <property type="method" value="EM"/>
    <property type="resolution" value="3.40 A"/>
    <property type="chains" value="A/B/C/D=118-756"/>
</dbReference>
<dbReference type="PDB" id="6PVL">
    <property type="method" value="EM"/>
    <property type="resolution" value="4.40 A"/>
    <property type="chains" value="A/B/C/D=1-791"/>
</dbReference>
<dbReference type="PDB" id="6PVM">
    <property type="method" value="EM"/>
    <property type="resolution" value="4.50 A"/>
    <property type="chains" value="A/B/C/D=1-791"/>
</dbReference>
<dbReference type="PDB" id="6PVN">
    <property type="method" value="EM"/>
    <property type="resolution" value="4.07 A"/>
    <property type="chains" value="A/B/C/D=1-791"/>
</dbReference>
<dbReference type="PDB" id="6PVO">
    <property type="method" value="EM"/>
    <property type="resolution" value="5.18 A"/>
    <property type="chains" value="A/B/C/D=1-791"/>
</dbReference>
<dbReference type="PDB" id="6PVP">
    <property type="method" value="EM"/>
    <property type="resolution" value="4.48 A"/>
    <property type="chains" value="A/B/C/D=1-791"/>
</dbReference>
<dbReference type="PDB" id="6PVQ">
    <property type="method" value="EM"/>
    <property type="resolution" value="4.75 A"/>
    <property type="chains" value="A/B/C/D=1-791"/>
</dbReference>
<dbReference type="PDB" id="7MIJ">
    <property type="method" value="EM"/>
    <property type="resolution" value="1.98 A"/>
    <property type="chains" value="A/B/C/D=1-791"/>
</dbReference>
<dbReference type="PDB" id="7MIK">
    <property type="method" value="EM"/>
    <property type="resolution" value="3.12 A"/>
    <property type="chains" value="A/B/C/D=1-791"/>
</dbReference>
<dbReference type="PDB" id="7MIL">
    <property type="method" value="EM"/>
    <property type="resolution" value="3.86 A"/>
    <property type="chains" value="A/B/C/D=1-791"/>
</dbReference>
<dbReference type="PDB" id="7MIM">
    <property type="method" value="EM"/>
    <property type="resolution" value="3.42 A"/>
    <property type="chains" value="A/B/C/D=1-791"/>
</dbReference>
<dbReference type="PDB" id="7MIN">
    <property type="method" value="EM"/>
    <property type="resolution" value="3.09 A"/>
    <property type="chains" value="A/B/C/D=1-791"/>
</dbReference>
<dbReference type="PDB" id="7MIO">
    <property type="method" value="EM"/>
    <property type="resolution" value="3.48 A"/>
    <property type="chains" value="A/B/C/D=1-791"/>
</dbReference>
<dbReference type="PDB" id="7RAS">
    <property type="method" value="EM"/>
    <property type="resolution" value="3.64 A"/>
    <property type="chains" value="A/B/C/D=1-791"/>
</dbReference>
<dbReference type="PDB" id="7RAU">
    <property type="method" value="EM"/>
    <property type="resolution" value="3.99 A"/>
    <property type="chains" value="A/B/C/D=1-791"/>
</dbReference>
<dbReference type="PDBsum" id="4N5Q"/>
<dbReference type="PDBsum" id="6LGP"/>
<dbReference type="PDBsum" id="6PVL"/>
<dbReference type="PDBsum" id="6PVM"/>
<dbReference type="PDBsum" id="6PVN"/>
<dbReference type="PDBsum" id="6PVO"/>
<dbReference type="PDBsum" id="6PVP"/>
<dbReference type="PDBsum" id="6PVQ"/>
<dbReference type="PDBsum" id="7MIJ"/>
<dbReference type="PDBsum" id="7MIK"/>
<dbReference type="PDBsum" id="7MIL"/>
<dbReference type="PDBsum" id="7MIM"/>
<dbReference type="PDBsum" id="7MIN"/>
<dbReference type="PDBsum" id="7MIO"/>
<dbReference type="PDBsum" id="7RAS"/>
<dbReference type="PDBsum" id="7RAU"/>
<dbReference type="EMDB" id="EMD-0882"/>
<dbReference type="EMDB" id="EMD-20492"/>
<dbReference type="EMDB" id="EMD-20493"/>
<dbReference type="EMDB" id="EMD-20494"/>
<dbReference type="EMDB" id="EMD-20495"/>
<dbReference type="EMDB" id="EMD-20496"/>
<dbReference type="EMDB" id="EMD-20497"/>
<dbReference type="EMDB" id="EMD-23853"/>
<dbReference type="EMDB" id="EMD-23854"/>
<dbReference type="EMDB" id="EMD-23855"/>
<dbReference type="EMDB" id="EMD-23856"/>
<dbReference type="EMDB" id="EMD-23857"/>
<dbReference type="EMDB" id="EMD-23858"/>
<dbReference type="EMDB" id="EMD-24385"/>
<dbReference type="EMDB" id="EMD-24386"/>
<dbReference type="EMDB" id="EMD-26488"/>
<dbReference type="EMDB" id="EMD-8919"/>
<dbReference type="EMDB" id="EMD-8920"/>
<dbReference type="EMDB" id="EMD-8921"/>
<dbReference type="EMDB" id="EMD-8925"/>
<dbReference type="SMR" id="Q8K424"/>
<dbReference type="FunCoup" id="Q8K424">
    <property type="interactions" value="11"/>
</dbReference>
<dbReference type="IntAct" id="Q8K424">
    <property type="interactions" value="1"/>
</dbReference>
<dbReference type="STRING" id="10090.ENSMUSP00000053755"/>
<dbReference type="BindingDB" id="Q8K424"/>
<dbReference type="ChEMBL" id="CHEMBL3879838"/>
<dbReference type="GuidetoPHARMACOLOGY" id="509"/>
<dbReference type="iPTMnet" id="Q8K424"/>
<dbReference type="PhosphoSitePlus" id="Q8K424"/>
<dbReference type="PaxDb" id="10090-ENSMUSP00000053755"/>
<dbReference type="ABCD" id="Q8K424">
    <property type="antibodies" value="2 sequenced antibodies"/>
</dbReference>
<dbReference type="Antibodypedia" id="23030">
    <property type="antibodies" value="415 antibodies from 33 providers"/>
</dbReference>
<dbReference type="DNASU" id="246788"/>
<dbReference type="Ensembl" id="ENSMUST00000049676.3">
    <property type="protein sequence ID" value="ENSMUSP00000053755.3"/>
    <property type="gene ID" value="ENSMUSG00000043029.3"/>
</dbReference>
<dbReference type="GeneID" id="246788"/>
<dbReference type="KEGG" id="mmu:246788"/>
<dbReference type="UCSC" id="uc007kaj.1">
    <property type="organism name" value="mouse"/>
</dbReference>
<dbReference type="AGR" id="MGI:2181407"/>
<dbReference type="CTD" id="162514"/>
<dbReference type="MGI" id="MGI:2181407">
    <property type="gene designation" value="Trpv3"/>
</dbReference>
<dbReference type="VEuPathDB" id="HostDB:ENSMUSG00000043029"/>
<dbReference type="eggNOG" id="KOG3676">
    <property type="taxonomic scope" value="Eukaryota"/>
</dbReference>
<dbReference type="GeneTree" id="ENSGT00940000158281"/>
<dbReference type="HOGENOM" id="CLU_012795_0_0_1"/>
<dbReference type="InParanoid" id="Q8K424"/>
<dbReference type="OMA" id="GNCEDMD"/>
<dbReference type="OrthoDB" id="533508at2759"/>
<dbReference type="PhylomeDB" id="Q8K424"/>
<dbReference type="TreeFam" id="TF314711"/>
<dbReference type="Reactome" id="R-MMU-3295583">
    <property type="pathway name" value="TRP channels"/>
</dbReference>
<dbReference type="BioGRID-ORCS" id="246788">
    <property type="hits" value="3 hits in 79 CRISPR screens"/>
</dbReference>
<dbReference type="EvolutionaryTrace" id="Q8K424"/>
<dbReference type="PRO" id="PR:Q8K424"/>
<dbReference type="Proteomes" id="UP000000589">
    <property type="component" value="Chromosome 11"/>
</dbReference>
<dbReference type="RNAct" id="Q8K424">
    <property type="molecule type" value="protein"/>
</dbReference>
<dbReference type="Bgee" id="ENSMUSG00000043029">
    <property type="expression patterns" value="Expressed in lip and 41 other cell types or tissues"/>
</dbReference>
<dbReference type="GO" id="GO:0005737">
    <property type="term" value="C:cytoplasm"/>
    <property type="evidence" value="ECO:0000250"/>
    <property type="project" value="UniProtKB"/>
</dbReference>
<dbReference type="GO" id="GO:0005764">
    <property type="term" value="C:lysosome"/>
    <property type="evidence" value="ECO:0000250"/>
    <property type="project" value="UniProtKB"/>
</dbReference>
<dbReference type="GO" id="GO:0016020">
    <property type="term" value="C:membrane"/>
    <property type="evidence" value="ECO:0000314"/>
    <property type="project" value="MGI"/>
</dbReference>
<dbReference type="GO" id="GO:0005886">
    <property type="term" value="C:plasma membrane"/>
    <property type="evidence" value="ECO:0000250"/>
    <property type="project" value="UniProtKB"/>
</dbReference>
<dbReference type="GO" id="GO:0043235">
    <property type="term" value="C:receptor complex"/>
    <property type="evidence" value="ECO:0000266"/>
    <property type="project" value="MGI"/>
</dbReference>
<dbReference type="GO" id="GO:0005262">
    <property type="term" value="F:calcium channel activity"/>
    <property type="evidence" value="ECO:0000250"/>
    <property type="project" value="UniProtKB"/>
</dbReference>
<dbReference type="GO" id="GO:0042802">
    <property type="term" value="F:identical protein binding"/>
    <property type="evidence" value="ECO:0007669"/>
    <property type="project" value="Ensembl"/>
</dbReference>
<dbReference type="GO" id="GO:0046872">
    <property type="term" value="F:metal ion binding"/>
    <property type="evidence" value="ECO:0007669"/>
    <property type="project" value="UniProtKB-KW"/>
</dbReference>
<dbReference type="GO" id="GO:0005261">
    <property type="term" value="F:monoatomic cation channel activity"/>
    <property type="evidence" value="ECO:0000314"/>
    <property type="project" value="MGI"/>
</dbReference>
<dbReference type="GO" id="GO:0005216">
    <property type="term" value="F:monoatomic ion channel activity"/>
    <property type="evidence" value="ECO:0000314"/>
    <property type="project" value="MGI"/>
</dbReference>
<dbReference type="GO" id="GO:0005272">
    <property type="term" value="F:sodium channel activity"/>
    <property type="evidence" value="ECO:0007669"/>
    <property type="project" value="Ensembl"/>
</dbReference>
<dbReference type="GO" id="GO:0042636">
    <property type="term" value="P:negative regulation of hair cycle"/>
    <property type="evidence" value="ECO:0007669"/>
    <property type="project" value="Ensembl"/>
</dbReference>
<dbReference type="GO" id="GO:0090280">
    <property type="term" value="P:positive regulation of calcium ion import"/>
    <property type="evidence" value="ECO:0007669"/>
    <property type="project" value="Ensembl"/>
</dbReference>
<dbReference type="GO" id="GO:0009266">
    <property type="term" value="P:response to temperature stimulus"/>
    <property type="evidence" value="ECO:0000314"/>
    <property type="project" value="MGI"/>
</dbReference>
<dbReference type="CDD" id="cd22194">
    <property type="entry name" value="TRPV3"/>
    <property type="match status" value="1"/>
</dbReference>
<dbReference type="FunFam" id="1.10.287.70:FF:000085">
    <property type="entry name" value="Transient receptor potential cation channel subfamily V member 3"/>
    <property type="match status" value="1"/>
</dbReference>
<dbReference type="FunFam" id="1.25.40.20:FF:000101">
    <property type="entry name" value="Transient receptor potential cation channel subfamily V member 3"/>
    <property type="match status" value="1"/>
</dbReference>
<dbReference type="Gene3D" id="1.10.287.70">
    <property type="match status" value="1"/>
</dbReference>
<dbReference type="Gene3D" id="1.25.40.20">
    <property type="entry name" value="Ankyrin repeat-containing domain"/>
    <property type="match status" value="1"/>
</dbReference>
<dbReference type="InterPro" id="IPR002110">
    <property type="entry name" value="Ankyrin_rpt"/>
</dbReference>
<dbReference type="InterPro" id="IPR036770">
    <property type="entry name" value="Ankyrin_rpt-contain_sf"/>
</dbReference>
<dbReference type="InterPro" id="IPR005821">
    <property type="entry name" value="Ion_trans_dom"/>
</dbReference>
<dbReference type="InterPro" id="IPR024862">
    <property type="entry name" value="TRPV"/>
</dbReference>
<dbReference type="InterPro" id="IPR008347">
    <property type="entry name" value="TrpV1-4"/>
</dbReference>
<dbReference type="PANTHER" id="PTHR10582:SF6">
    <property type="entry name" value="TRANSIENT RECEPTOR POTENTIAL CATION CHANNEL SUBFAMILY V MEMBER 3"/>
    <property type="match status" value="1"/>
</dbReference>
<dbReference type="PANTHER" id="PTHR10582">
    <property type="entry name" value="TRANSIENT RECEPTOR POTENTIAL ION CHANNEL PROTEIN"/>
    <property type="match status" value="1"/>
</dbReference>
<dbReference type="Pfam" id="PF00023">
    <property type="entry name" value="Ank"/>
    <property type="match status" value="2"/>
</dbReference>
<dbReference type="Pfam" id="PF12796">
    <property type="entry name" value="Ank_2"/>
    <property type="match status" value="1"/>
</dbReference>
<dbReference type="Pfam" id="PF00520">
    <property type="entry name" value="Ion_trans"/>
    <property type="match status" value="1"/>
</dbReference>
<dbReference type="PRINTS" id="PR01768">
    <property type="entry name" value="TRPVRECEPTOR"/>
</dbReference>
<dbReference type="SMART" id="SM00248">
    <property type="entry name" value="ANK"/>
    <property type="match status" value="4"/>
</dbReference>
<dbReference type="SUPFAM" id="SSF48403">
    <property type="entry name" value="Ankyrin repeat"/>
    <property type="match status" value="1"/>
</dbReference>
<dbReference type="PROSITE" id="PS50297">
    <property type="entry name" value="ANK_REP_REGION"/>
    <property type="match status" value="1"/>
</dbReference>
<dbReference type="PROSITE" id="PS50088">
    <property type="entry name" value="ANK_REPEAT"/>
    <property type="match status" value="2"/>
</dbReference>
<name>TRPV3_MOUSE</name>
<reference key="1">
    <citation type="journal article" date="2002" name="Science">
        <title>A heat-sensitive TRP channel expressed in keratinocytes.</title>
        <authorList>
            <person name="Peier A.M."/>
            <person name="Reeve A.J."/>
            <person name="Andersson D.A."/>
            <person name="Moqrich A."/>
            <person name="Earley T.J."/>
            <person name="Hergarden A.C."/>
            <person name="Story G.M."/>
            <person name="Colley S."/>
            <person name="Hogenesch J."/>
            <person name="McIntyre P."/>
            <person name="Bevan S."/>
            <person name="Patapoutian A."/>
        </authorList>
    </citation>
    <scope>NUCLEOTIDE SEQUENCE [MRNA]</scope>
    <scope>FUNCTION</scope>
    <scope>TISSUE SPECIFICITY</scope>
    <scope>TRANSPORTER ACTIVITY</scope>
    <source>
        <strain>C57BL/6J</strain>
    </source>
</reference>
<reference key="2">
    <citation type="journal article" date="2009" name="PLoS Biol.">
        <title>Lineage-specific biology revealed by a finished genome assembly of the mouse.</title>
        <authorList>
            <person name="Church D.M."/>
            <person name="Goodstadt L."/>
            <person name="Hillier L.W."/>
            <person name="Zody M.C."/>
            <person name="Goldstein S."/>
            <person name="She X."/>
            <person name="Bult C.J."/>
            <person name="Agarwala R."/>
            <person name="Cherry J.L."/>
            <person name="DiCuccio M."/>
            <person name="Hlavina W."/>
            <person name="Kapustin Y."/>
            <person name="Meric P."/>
            <person name="Maglott D."/>
            <person name="Birtle Z."/>
            <person name="Marques A.C."/>
            <person name="Graves T."/>
            <person name="Zhou S."/>
            <person name="Teague B."/>
            <person name="Potamousis K."/>
            <person name="Churas C."/>
            <person name="Place M."/>
            <person name="Herschleb J."/>
            <person name="Runnheim R."/>
            <person name="Forrest D."/>
            <person name="Amos-Landgraf J."/>
            <person name="Schwartz D.C."/>
            <person name="Cheng Z."/>
            <person name="Lindblad-Toh K."/>
            <person name="Eichler E.E."/>
            <person name="Ponting C.P."/>
        </authorList>
    </citation>
    <scope>NUCLEOTIDE SEQUENCE [LARGE SCALE GENOMIC DNA]</scope>
    <source>
        <strain>C57BL/6J</strain>
    </source>
</reference>
<proteinExistence type="evidence at protein level"/>
<protein>
    <recommendedName>
        <fullName>Transient receptor potential cation channel subfamily V member 3</fullName>
        <shortName>TrpV3</shortName>
    </recommendedName>
</protein>
<keyword id="KW-0002">3D-structure</keyword>
<keyword id="KW-0040">ANK repeat</keyword>
<keyword id="KW-0106">Calcium</keyword>
<keyword id="KW-0107">Calcium channel</keyword>
<keyword id="KW-0109">Calcium transport</keyword>
<keyword id="KW-1003">Cell membrane</keyword>
<keyword id="KW-0963">Cytoplasm</keyword>
<keyword id="KW-0407">Ion channel</keyword>
<keyword id="KW-0406">Ion transport</keyword>
<keyword id="KW-0458">Lysosome</keyword>
<keyword id="KW-0472">Membrane</keyword>
<keyword id="KW-0479">Metal-binding</keyword>
<keyword id="KW-1185">Reference proteome</keyword>
<keyword id="KW-0677">Repeat</keyword>
<keyword id="KW-0915">Sodium</keyword>
<keyword id="KW-0812">Transmembrane</keyword>
<keyword id="KW-1133">Transmembrane helix</keyword>
<keyword id="KW-0813">Transport</keyword>
<gene>
    <name type="primary">Trpv3</name>
</gene>